<proteinExistence type="inferred from homology"/>
<gene>
    <name evidence="2" type="primary">petD</name>
</gene>
<geneLocation type="chloroplast"/>
<protein>
    <recommendedName>
        <fullName evidence="2">Cytochrome b6-f complex subunit 4</fullName>
    </recommendedName>
    <alternativeName>
        <fullName evidence="2">17 kDa polypeptide</fullName>
    </alternativeName>
</protein>
<organism>
    <name type="scientific">Triticum aestivum</name>
    <name type="common">Wheat</name>
    <dbReference type="NCBI Taxonomy" id="4565"/>
    <lineage>
        <taxon>Eukaryota</taxon>
        <taxon>Viridiplantae</taxon>
        <taxon>Streptophyta</taxon>
        <taxon>Embryophyta</taxon>
        <taxon>Tracheophyta</taxon>
        <taxon>Spermatophyta</taxon>
        <taxon>Magnoliopsida</taxon>
        <taxon>Liliopsida</taxon>
        <taxon>Poales</taxon>
        <taxon>Poaceae</taxon>
        <taxon>BOP clade</taxon>
        <taxon>Pooideae</taxon>
        <taxon>Triticodae</taxon>
        <taxon>Triticeae</taxon>
        <taxon>Triticinae</taxon>
        <taxon>Triticum</taxon>
    </lineage>
</organism>
<dbReference type="EMBL" id="X54751">
    <property type="protein sequence ID" value="CAA38552.1"/>
    <property type="molecule type" value="Genomic_DNA"/>
</dbReference>
<dbReference type="EMBL" id="AB042240">
    <property type="protein sequence ID" value="BAB47064.1"/>
    <property type="molecule type" value="Genomic_DNA"/>
</dbReference>
<dbReference type="EMBL" id="X15595">
    <property type="protein sequence ID" value="CAA33619.1"/>
    <property type="molecule type" value="Genomic_DNA"/>
</dbReference>
<dbReference type="PIR" id="S14962">
    <property type="entry name" value="S14962"/>
</dbReference>
<dbReference type="RefSeq" id="NP_114288.1">
    <property type="nucleotide sequence ID" value="NC_002762.1"/>
</dbReference>
<dbReference type="SMR" id="P12119"/>
<dbReference type="STRING" id="4565.P12119"/>
<dbReference type="PaxDb" id="4565-EPlTAEP00000010072"/>
<dbReference type="GeneID" id="803109"/>
<dbReference type="KEGG" id="taes:803109"/>
<dbReference type="eggNOG" id="KOG4663">
    <property type="taxonomic scope" value="Eukaryota"/>
</dbReference>
<dbReference type="Proteomes" id="UP000019116">
    <property type="component" value="Chloroplast"/>
</dbReference>
<dbReference type="GO" id="GO:0009535">
    <property type="term" value="C:chloroplast thylakoid membrane"/>
    <property type="evidence" value="ECO:0007669"/>
    <property type="project" value="UniProtKB-SubCell"/>
</dbReference>
<dbReference type="GO" id="GO:0045158">
    <property type="term" value="F:electron transporter, transferring electrons within cytochrome b6/f complex of photosystem II activity"/>
    <property type="evidence" value="ECO:0007669"/>
    <property type="project" value="UniProtKB-UniRule"/>
</dbReference>
<dbReference type="GO" id="GO:0045156">
    <property type="term" value="F:electron transporter, transferring electrons within the cyclic electron transport pathway of photosynthesis activity"/>
    <property type="evidence" value="ECO:0007669"/>
    <property type="project" value="InterPro"/>
</dbReference>
<dbReference type="GO" id="GO:0016491">
    <property type="term" value="F:oxidoreductase activity"/>
    <property type="evidence" value="ECO:0007669"/>
    <property type="project" value="InterPro"/>
</dbReference>
<dbReference type="GO" id="GO:0009767">
    <property type="term" value="P:photosynthetic electron transport chain"/>
    <property type="evidence" value="ECO:0007669"/>
    <property type="project" value="InterPro"/>
</dbReference>
<dbReference type="CDD" id="cd00290">
    <property type="entry name" value="cytochrome_b_C"/>
    <property type="match status" value="1"/>
</dbReference>
<dbReference type="FunFam" id="1.10.287.980:FF:000001">
    <property type="entry name" value="Cytochrome b6-f complex subunit 4"/>
    <property type="match status" value="1"/>
</dbReference>
<dbReference type="FunFam" id="1.20.5.510:FF:000002">
    <property type="entry name" value="Cytochrome b6-f complex subunit 4"/>
    <property type="match status" value="1"/>
</dbReference>
<dbReference type="Gene3D" id="1.10.287.980">
    <property type="entry name" value="plastocyanin oxidoreductase"/>
    <property type="match status" value="1"/>
</dbReference>
<dbReference type="Gene3D" id="1.20.5.510">
    <property type="entry name" value="Single helix bin"/>
    <property type="match status" value="1"/>
</dbReference>
<dbReference type="HAMAP" id="MF_01344">
    <property type="entry name" value="Cytb6_f_subIV"/>
    <property type="match status" value="1"/>
</dbReference>
<dbReference type="InterPro" id="IPR005798">
    <property type="entry name" value="Cyt_b/b6_C"/>
</dbReference>
<dbReference type="InterPro" id="IPR036150">
    <property type="entry name" value="Cyt_b/b6_C_sf"/>
</dbReference>
<dbReference type="InterPro" id="IPR005870">
    <property type="entry name" value="Cyt_b6/f_cplx_suIV"/>
</dbReference>
<dbReference type="InterPro" id="IPR048260">
    <property type="entry name" value="Cytochrome_b_C_euk/bac"/>
</dbReference>
<dbReference type="NCBIfam" id="TIGR01156">
    <property type="entry name" value="cytb6_f_IV"/>
    <property type="match status" value="1"/>
</dbReference>
<dbReference type="PANTHER" id="PTHR19271">
    <property type="entry name" value="CYTOCHROME B"/>
    <property type="match status" value="1"/>
</dbReference>
<dbReference type="PANTHER" id="PTHR19271:SF40">
    <property type="entry name" value="CYTOCHROME B"/>
    <property type="match status" value="1"/>
</dbReference>
<dbReference type="Pfam" id="PF00032">
    <property type="entry name" value="Cytochrom_B_C"/>
    <property type="match status" value="1"/>
</dbReference>
<dbReference type="PIRSF" id="PIRSF000033">
    <property type="entry name" value="B6f_17K"/>
    <property type="match status" value="1"/>
</dbReference>
<dbReference type="SUPFAM" id="SSF81648">
    <property type="entry name" value="a domain/subunit of cytochrome bc1 complex (Ubiquinol-cytochrome c reductase)"/>
    <property type="match status" value="1"/>
</dbReference>
<dbReference type="PROSITE" id="PS51003">
    <property type="entry name" value="CYTB_CTER"/>
    <property type="match status" value="1"/>
</dbReference>
<name>PETD_WHEAT</name>
<evidence type="ECO:0000250" key="1"/>
<evidence type="ECO:0000255" key="2">
    <source>
        <dbReference type="HAMAP-Rule" id="MF_01344"/>
    </source>
</evidence>
<evidence type="ECO:0000305" key="3"/>
<reference key="1">
    <citation type="journal article" date="1991" name="Plant Mol. Biol.">
        <title>Nucleotide sequence of the wheat chloroplast petB and petD genes encoding apocytochrome b-563 and subunit IV of the cytochrome bf complex.</title>
        <authorList>
            <person name="Hird S.M."/>
            <person name="Wilson R.J."/>
            <person name="Dyer T.A."/>
            <person name="Gray J.C."/>
        </authorList>
    </citation>
    <scope>NUCLEOTIDE SEQUENCE [GENOMIC DNA]</scope>
    <source>
        <strain>cv. Mardler</strain>
    </source>
</reference>
<reference key="2">
    <citation type="journal article" date="2000" name="Plant Mol. Biol. Rep.">
        <title>Chinese spring wheat (Triticum aestivum L.) chloroplast genome: complete sequence and contig clones.</title>
        <authorList>
            <person name="Ogihara Y."/>
            <person name="Isono K."/>
            <person name="Kojima T."/>
            <person name="Endo A."/>
            <person name="Hanaoka M."/>
            <person name="Shiina T."/>
            <person name="Terachi T."/>
            <person name="Utsugi S."/>
            <person name="Murata M."/>
            <person name="Mori N."/>
            <person name="Takumi S."/>
            <person name="Ikeo K."/>
            <person name="Gojobori T."/>
            <person name="Murai R."/>
            <person name="Murai K."/>
            <person name="Matsuoka Y."/>
            <person name="Ohnishi Y."/>
            <person name="Tajiri H."/>
            <person name="Tsunewaki K."/>
        </authorList>
    </citation>
    <scope>NUCLEOTIDE SEQUENCE [LARGE SCALE GENOMIC DNA]</scope>
    <source>
        <strain>cv. Chinese Spring</strain>
    </source>
</reference>
<reference key="3">
    <citation type="journal article" date="1989" name="Nucleic Acids Res.">
        <title>Nucleotide sequence of the rpoA gene in wheat chloroplast DNA.</title>
        <authorList>
            <person name="Hird S.M."/>
            <person name="Dyer T.A."/>
            <person name="Gray J.C."/>
        </authorList>
    </citation>
    <scope>NUCLEOTIDE SEQUENCE [GENOMIC DNA] OF 149-160</scope>
    <source>
        <strain>cv. Mardler</strain>
    </source>
</reference>
<comment type="function">
    <text evidence="2">Component of the cytochrome b6-f complex, which mediates electron transfer between photosystem II (PSII) and photosystem I (PSI), cyclic electron flow around PSI, and state transitions.</text>
</comment>
<comment type="subunit">
    <text evidence="1">The 4 large subunits of the cytochrome b6-f complex are cytochrome b6, subunit IV (17 kDa polypeptide, petD), cytochrome f and the Rieske protein, while the 4 small subunits are petG, petL, petM and petN. The complex functions as a dimer (By similarity).</text>
</comment>
<comment type="subcellular location">
    <subcellularLocation>
        <location evidence="2">Plastid</location>
        <location evidence="2">Chloroplast thylakoid membrane</location>
        <topology evidence="2">Multi-pass membrane protein</topology>
    </subcellularLocation>
</comment>
<comment type="similarity">
    <text evidence="2">Belongs to the cytochrome b family. PetD subfamily.</text>
</comment>
<feature type="chain" id="PRO_0000061896" description="Cytochrome b6-f complex subunit 4">
    <location>
        <begin position="1"/>
        <end position="160"/>
    </location>
</feature>
<feature type="transmembrane region" description="Helical" evidence="2">
    <location>
        <begin position="36"/>
        <end position="56"/>
    </location>
</feature>
<feature type="transmembrane region" description="Helical" evidence="2">
    <location>
        <begin position="95"/>
        <end position="115"/>
    </location>
</feature>
<feature type="transmembrane region" description="Helical" evidence="2">
    <location>
        <begin position="131"/>
        <end position="151"/>
    </location>
</feature>
<feature type="sequence conflict" description="In Ref. 1; CAA38552." evidence="3" ref="1">
    <original>L</original>
    <variation>F</variation>
    <location>
        <position position="109"/>
    </location>
</feature>
<sequence>MGVTKKPDLNDPVLRAKLAKGMGHNYYGEPAWPNDLLYIFPVVILGTIACNVGLAVLEPSMIGEPADPFATPLEILPEWYFFPVFQILRTVPNKLLGVLLMVSVPTGLLTVPFLENVNKFQNPFRRPVATTVFLIGTVVALWLGIGATLPIDKSLTLGLF</sequence>
<accession>P12119</accession>
<keyword id="KW-0150">Chloroplast</keyword>
<keyword id="KW-0249">Electron transport</keyword>
<keyword id="KW-0472">Membrane</keyword>
<keyword id="KW-0602">Photosynthesis</keyword>
<keyword id="KW-0934">Plastid</keyword>
<keyword id="KW-1185">Reference proteome</keyword>
<keyword id="KW-0793">Thylakoid</keyword>
<keyword id="KW-0812">Transmembrane</keyword>
<keyword id="KW-1133">Transmembrane helix</keyword>
<keyword id="KW-0813">Transport</keyword>